<dbReference type="EMBL" id="AF333970">
    <property type="protein sequence ID" value="AAK20857.1"/>
    <property type="molecule type" value="mRNA"/>
</dbReference>
<dbReference type="EMBL" id="AB009050">
    <property type="protein sequence ID" value="BAB09240.1"/>
    <property type="molecule type" value="Genomic_DNA"/>
</dbReference>
<dbReference type="EMBL" id="CP002688">
    <property type="protein sequence ID" value="AED96673.1"/>
    <property type="molecule type" value="Genomic_DNA"/>
</dbReference>
<dbReference type="EMBL" id="CP002688">
    <property type="protein sequence ID" value="AED96674.1"/>
    <property type="molecule type" value="Genomic_DNA"/>
</dbReference>
<dbReference type="EMBL" id="BT002537">
    <property type="protein sequence ID" value="AAO00897.1"/>
    <property type="molecule type" value="mRNA"/>
</dbReference>
<dbReference type="EMBL" id="BT008510">
    <property type="protein sequence ID" value="AAP37869.1"/>
    <property type="molecule type" value="mRNA"/>
</dbReference>
<dbReference type="EMBL" id="AY088827">
    <property type="protein sequence ID" value="AAM67371.1"/>
    <property type="molecule type" value="mRNA"/>
</dbReference>
<dbReference type="RefSeq" id="NP_001190550.1">
    <property type="nucleotide sequence ID" value="NM_001203621.1"/>
</dbReference>
<dbReference type="RefSeq" id="NP_200384.1">
    <property type="nucleotide sequence ID" value="NM_124955.4"/>
</dbReference>
<dbReference type="SMR" id="Q9FM65"/>
<dbReference type="FunCoup" id="Q9FM65">
    <property type="interactions" value="150"/>
</dbReference>
<dbReference type="STRING" id="3702.Q9FM65"/>
<dbReference type="GlyCosmos" id="Q9FM65">
    <property type="glycosylation" value="5 sites, No reported glycans"/>
</dbReference>
<dbReference type="GlyGen" id="Q9FM65">
    <property type="glycosylation" value="6 sites"/>
</dbReference>
<dbReference type="iPTMnet" id="Q9FM65"/>
<dbReference type="SwissPalm" id="Q9FM65"/>
<dbReference type="PaxDb" id="3702-AT5G55730.1"/>
<dbReference type="ProteomicsDB" id="230602"/>
<dbReference type="EnsemblPlants" id="AT5G55730.1">
    <property type="protein sequence ID" value="AT5G55730.1"/>
    <property type="gene ID" value="AT5G55730"/>
</dbReference>
<dbReference type="EnsemblPlants" id="AT5G55730.2">
    <property type="protein sequence ID" value="AT5G55730.2"/>
    <property type="gene ID" value="AT5G55730"/>
</dbReference>
<dbReference type="GeneID" id="835667"/>
<dbReference type="Gramene" id="AT5G55730.1">
    <property type="protein sequence ID" value="AT5G55730.1"/>
    <property type="gene ID" value="AT5G55730"/>
</dbReference>
<dbReference type="Gramene" id="AT5G55730.2">
    <property type="protein sequence ID" value="AT5G55730.2"/>
    <property type="gene ID" value="AT5G55730"/>
</dbReference>
<dbReference type="KEGG" id="ath:AT5G55730"/>
<dbReference type="Araport" id="AT5G55730"/>
<dbReference type="TAIR" id="AT5G55730">
    <property type="gene designation" value="FLA1"/>
</dbReference>
<dbReference type="eggNOG" id="ENOG502QR33">
    <property type="taxonomic scope" value="Eukaryota"/>
</dbReference>
<dbReference type="HOGENOM" id="CLU_036139_0_1_1"/>
<dbReference type="InParanoid" id="Q9FM65"/>
<dbReference type="OMA" id="EEMPYNI"/>
<dbReference type="PhylomeDB" id="Q9FM65"/>
<dbReference type="PRO" id="PR:Q9FM65"/>
<dbReference type="Proteomes" id="UP000006548">
    <property type="component" value="Chromosome 5"/>
</dbReference>
<dbReference type="ExpressionAtlas" id="Q9FM65">
    <property type="expression patterns" value="baseline and differential"/>
</dbReference>
<dbReference type="GO" id="GO:0048046">
    <property type="term" value="C:apoplast"/>
    <property type="evidence" value="ECO:0007669"/>
    <property type="project" value="UniProtKB-SubCell"/>
</dbReference>
<dbReference type="GO" id="GO:0005886">
    <property type="term" value="C:plasma membrane"/>
    <property type="evidence" value="ECO:0007005"/>
    <property type="project" value="TAIR"/>
</dbReference>
<dbReference type="GO" id="GO:0009536">
    <property type="term" value="C:plastid"/>
    <property type="evidence" value="ECO:0007005"/>
    <property type="project" value="TAIR"/>
</dbReference>
<dbReference type="GO" id="GO:0099503">
    <property type="term" value="C:secretory vesicle"/>
    <property type="evidence" value="ECO:0007005"/>
    <property type="project" value="TAIR"/>
</dbReference>
<dbReference type="GO" id="GO:0098552">
    <property type="term" value="C:side of membrane"/>
    <property type="evidence" value="ECO:0007669"/>
    <property type="project" value="UniProtKB-KW"/>
</dbReference>
<dbReference type="GO" id="GO:0048364">
    <property type="term" value="P:root development"/>
    <property type="evidence" value="ECO:0000315"/>
    <property type="project" value="TAIR"/>
</dbReference>
<dbReference type="GO" id="GO:0048367">
    <property type="term" value="P:shoot system development"/>
    <property type="evidence" value="ECO:0000315"/>
    <property type="project" value="TAIR"/>
</dbReference>
<dbReference type="FunFam" id="2.30.180.10:FF:000008">
    <property type="entry name" value="Fasciclin-like arabinogalactan protein 10"/>
    <property type="match status" value="1"/>
</dbReference>
<dbReference type="FunFam" id="2.30.180.10:FF:000010">
    <property type="entry name" value="Fasciclin-like arabinogalactan protein 2"/>
    <property type="match status" value="1"/>
</dbReference>
<dbReference type="Gene3D" id="2.30.180.10">
    <property type="entry name" value="FAS1 domain"/>
    <property type="match status" value="2"/>
</dbReference>
<dbReference type="InterPro" id="IPR036378">
    <property type="entry name" value="FAS1_dom_sf"/>
</dbReference>
<dbReference type="InterPro" id="IPR000782">
    <property type="entry name" value="FAS1_domain"/>
</dbReference>
<dbReference type="InterPro" id="IPR033254">
    <property type="entry name" value="Plant_FLA"/>
</dbReference>
<dbReference type="PANTHER" id="PTHR32382">
    <property type="entry name" value="FASCICLIN-LIKE ARABINOGALACTAN PROTEIN"/>
    <property type="match status" value="1"/>
</dbReference>
<dbReference type="PANTHER" id="PTHR32382:SF4">
    <property type="entry name" value="FASCICLIN-LIKE ARABINOGALACTAN PROTEIN 1"/>
    <property type="match status" value="1"/>
</dbReference>
<dbReference type="Pfam" id="PF02469">
    <property type="entry name" value="Fasciclin"/>
    <property type="match status" value="2"/>
</dbReference>
<dbReference type="SMART" id="SM00554">
    <property type="entry name" value="FAS1"/>
    <property type="match status" value="2"/>
</dbReference>
<dbReference type="SUPFAM" id="SSF82153">
    <property type="entry name" value="FAS1 domain"/>
    <property type="match status" value="2"/>
</dbReference>
<dbReference type="PROSITE" id="PS50213">
    <property type="entry name" value="FAS1"/>
    <property type="match status" value="2"/>
</dbReference>
<feature type="signal peptide" evidence="1">
    <location>
        <begin position="1"/>
        <end position="24"/>
    </location>
</feature>
<feature type="chain" id="PRO_0000008776" description="Fasciclin-like arabinogalactan protein 1">
    <location>
        <begin position="25"/>
        <end position="396"/>
    </location>
</feature>
<feature type="propeptide" id="PRO_0000008777" description="Removed in mature form" evidence="1">
    <location>
        <begin position="397"/>
        <end position="424"/>
    </location>
</feature>
<feature type="domain" description="FAS1 1" evidence="2">
    <location>
        <begin position="25"/>
        <end position="170"/>
    </location>
</feature>
<feature type="domain" description="FAS1 2" evidence="2">
    <location>
        <begin position="184"/>
        <end position="323"/>
    </location>
</feature>
<feature type="region of interest" description="Disordered" evidence="3">
    <location>
        <begin position="338"/>
        <end position="393"/>
    </location>
</feature>
<feature type="compositionally biased region" description="Basic residues" evidence="3">
    <location>
        <begin position="355"/>
        <end position="366"/>
    </location>
</feature>
<feature type="lipid moiety-binding region" description="GPI-anchor amidated aspartate" evidence="1">
    <location>
        <position position="396"/>
    </location>
</feature>
<feature type="glycosylation site" description="N-linked (GlcNAc...) asparagine" evidence="1">
    <location>
        <position position="26"/>
    </location>
</feature>
<feature type="glycosylation site" description="N-linked (GlcNAc...) asparagine" evidence="1">
    <location>
        <position position="128"/>
    </location>
</feature>
<feature type="glycosylation site" description="N-linked (GlcNAc...) asparagine" evidence="1">
    <location>
        <position position="160"/>
    </location>
</feature>
<feature type="glycosylation site" description="N-linked (GlcNAc...) asparagine" evidence="1">
    <location>
        <position position="186"/>
    </location>
</feature>
<feature type="glycosylation site" description="N-linked (GlcNAc...) asparagine" evidence="1">
    <location>
        <position position="240"/>
    </location>
</feature>
<sequence>MAKKMSSLIIIFNILLLLTTQTHAHNVTRLLANHPSFSSFSHFLTQTHLADEINRRRTITVCAVDNAAMSALTSKGYTLSTLKNILSLHVLLDYFGTKKLHQIRDGSALAATLFQATGAAPGTSGFVNITDLRGGKVGFGPDGGDLSSFFVKSIEEVPYNISIIQISRVLPSETAAAPTPAPAEMNLTGIMSAHGCKVFAETLLTNPGASKTYQESLEGGMTVFCPGDDAMKGFLPKYKNLTAPKKEAFLDFLAVPTYYSMAMLKSNNGPMNTLATDGANKFELTVQNDGEKVTLKTRINTVKIVDTLIDEQPLAIYATDKVLLPKELFKASAVEAPAPAPAPEDGDVADSPKAAKGKAKGKKKKAAPSPDNDPFGDSDSPAEGPDGEADDATADDAGAVRIIGGAKAGLVVSLLCLFASSWLL</sequence>
<reference key="1">
    <citation type="journal article" date="2001" name="Plant Mol. Biol.">
        <title>The complex structures of arabinogalactan-proteins and the journey towards understanding function.</title>
        <authorList>
            <person name="Gaspar Y."/>
            <person name="Johnson K.L."/>
            <person name="McKenna J.A."/>
            <person name="Bacic A."/>
            <person name="Schultz C.J."/>
        </authorList>
    </citation>
    <scope>NUCLEOTIDE SEQUENCE [MRNA]</scope>
</reference>
<reference key="2">
    <citation type="journal article" date="1998" name="DNA Res.">
        <title>Structural analysis of Arabidopsis thaliana chromosome 5. IV. Sequence features of the regions of 1,456,315 bp covered by nineteen physically assigned P1 and TAC clones.</title>
        <authorList>
            <person name="Sato S."/>
            <person name="Kaneko T."/>
            <person name="Kotani H."/>
            <person name="Nakamura Y."/>
            <person name="Asamizu E."/>
            <person name="Miyajima N."/>
            <person name="Tabata S."/>
        </authorList>
    </citation>
    <scope>NUCLEOTIDE SEQUENCE [LARGE SCALE GENOMIC DNA]</scope>
    <source>
        <strain>cv. Columbia</strain>
    </source>
</reference>
<reference key="3">
    <citation type="journal article" date="2017" name="Plant J.">
        <title>Araport11: a complete reannotation of the Arabidopsis thaliana reference genome.</title>
        <authorList>
            <person name="Cheng C.Y."/>
            <person name="Krishnakumar V."/>
            <person name="Chan A.P."/>
            <person name="Thibaud-Nissen F."/>
            <person name="Schobel S."/>
            <person name="Town C.D."/>
        </authorList>
    </citation>
    <scope>GENOME REANNOTATION</scope>
    <source>
        <strain>cv. Columbia</strain>
    </source>
</reference>
<reference key="4">
    <citation type="journal article" date="2003" name="Science">
        <title>Empirical analysis of transcriptional activity in the Arabidopsis genome.</title>
        <authorList>
            <person name="Yamada K."/>
            <person name="Lim J."/>
            <person name="Dale J.M."/>
            <person name="Chen H."/>
            <person name="Shinn P."/>
            <person name="Palm C.J."/>
            <person name="Southwick A.M."/>
            <person name="Wu H.C."/>
            <person name="Kim C.J."/>
            <person name="Nguyen M."/>
            <person name="Pham P.K."/>
            <person name="Cheuk R.F."/>
            <person name="Karlin-Newmann G."/>
            <person name="Liu S.X."/>
            <person name="Lam B."/>
            <person name="Sakano H."/>
            <person name="Wu T."/>
            <person name="Yu G."/>
            <person name="Miranda M."/>
            <person name="Quach H.L."/>
            <person name="Tripp M."/>
            <person name="Chang C.H."/>
            <person name="Lee J.M."/>
            <person name="Toriumi M.J."/>
            <person name="Chan M.M."/>
            <person name="Tang C.C."/>
            <person name="Onodera C.S."/>
            <person name="Deng J.M."/>
            <person name="Akiyama K."/>
            <person name="Ansari Y."/>
            <person name="Arakawa T."/>
            <person name="Banh J."/>
            <person name="Banno F."/>
            <person name="Bowser L."/>
            <person name="Brooks S.Y."/>
            <person name="Carninci P."/>
            <person name="Chao Q."/>
            <person name="Choy N."/>
            <person name="Enju A."/>
            <person name="Goldsmith A.D."/>
            <person name="Gurjal M."/>
            <person name="Hansen N.F."/>
            <person name="Hayashizaki Y."/>
            <person name="Johnson-Hopson C."/>
            <person name="Hsuan V.W."/>
            <person name="Iida K."/>
            <person name="Karnes M."/>
            <person name="Khan S."/>
            <person name="Koesema E."/>
            <person name="Ishida J."/>
            <person name="Jiang P.X."/>
            <person name="Jones T."/>
            <person name="Kawai J."/>
            <person name="Kamiya A."/>
            <person name="Meyers C."/>
            <person name="Nakajima M."/>
            <person name="Narusaka M."/>
            <person name="Seki M."/>
            <person name="Sakurai T."/>
            <person name="Satou M."/>
            <person name="Tamse R."/>
            <person name="Vaysberg M."/>
            <person name="Wallender E.K."/>
            <person name="Wong C."/>
            <person name="Yamamura Y."/>
            <person name="Yuan S."/>
            <person name="Shinozaki K."/>
            <person name="Davis R.W."/>
            <person name="Theologis A."/>
            <person name="Ecker J.R."/>
        </authorList>
    </citation>
    <scope>NUCLEOTIDE SEQUENCE [LARGE SCALE MRNA]</scope>
    <source>
        <strain>cv. Columbia</strain>
    </source>
</reference>
<reference key="5">
    <citation type="submission" date="2002-03" db="EMBL/GenBank/DDBJ databases">
        <title>Full-length cDNA from Arabidopsis thaliana.</title>
        <authorList>
            <person name="Brover V.V."/>
            <person name="Troukhan M.E."/>
            <person name="Alexandrov N.A."/>
            <person name="Lu Y.-P."/>
            <person name="Flavell R.B."/>
            <person name="Feldmann K.A."/>
        </authorList>
    </citation>
    <scope>NUCLEOTIDE SEQUENCE [LARGE SCALE MRNA] OF 232-424</scope>
</reference>
<reference key="6">
    <citation type="journal article" date="2003" name="Plant Physiol.">
        <title>The fasciclin-like arabinogalactan proteins of Arabidopsis. A multigene family of putative cell adhesion molecules.</title>
        <authorList>
            <person name="Johnson K.L."/>
            <person name="Jones B.J."/>
            <person name="Bacic A."/>
            <person name="Schultz C.J."/>
        </authorList>
    </citation>
    <scope>GENE FAMILY ORGANIZATION</scope>
    <scope>NOMENCLATURE</scope>
    <scope>TISSUE SPECIFICITY</scope>
    <scope>INDUCTION</scope>
</reference>
<reference key="7">
    <citation type="journal article" date="2005" name="Proteomics">
        <title>Cell wall proteins in apoplastic fluids of Arabidopsis thaliana rosettes: identification by mass spectrometry and bioinformatics.</title>
        <authorList>
            <person name="Boudart G."/>
            <person name="Jamet E."/>
            <person name="Rossignol M."/>
            <person name="Lafitte C."/>
            <person name="Borderies G."/>
            <person name="Jauneau A."/>
            <person name="Esquerre-Tugaye M.-T."/>
            <person name="Pont-Lezica R."/>
        </authorList>
    </citation>
    <scope>IDENTIFICATION BY MASS SPECTROMETRY</scope>
    <scope>SUBCELLULAR LOCATION [LARGE SCALE ANALYSIS]</scope>
    <source>
        <strain>cv. Columbia</strain>
    </source>
</reference>
<name>FLA1_ARATH</name>
<evidence type="ECO:0000255" key="1"/>
<evidence type="ECO:0000255" key="2">
    <source>
        <dbReference type="PROSITE-ProRule" id="PRU00082"/>
    </source>
</evidence>
<evidence type="ECO:0000256" key="3">
    <source>
        <dbReference type="SAM" id="MobiDB-lite"/>
    </source>
</evidence>
<evidence type="ECO:0000269" key="4">
    <source>
    </source>
</evidence>
<evidence type="ECO:0000269" key="5">
    <source>
    </source>
</evidence>
<evidence type="ECO:0000305" key="6"/>
<protein>
    <recommendedName>
        <fullName>Fasciclin-like arabinogalactan protein 1</fullName>
    </recommendedName>
</protein>
<comment type="function">
    <text>May be a cell surface adhesion protein.</text>
</comment>
<comment type="subcellular location">
    <subcellularLocation>
        <location evidence="5">Secreted</location>
        <location evidence="5">Extracellular space</location>
        <location evidence="5">Apoplast</location>
    </subcellularLocation>
    <subcellularLocation>
        <location>Cell membrane</location>
        <topology>Lipid-anchor</topology>
        <topology>GPI-anchor</topology>
    </subcellularLocation>
</comment>
<comment type="tissue specificity">
    <text evidence="4">Preferentially expressed in flowers.</text>
</comment>
<comment type="induction">
    <text evidence="4">Down-regulated by abscisic acid (ABA).</text>
</comment>
<comment type="similarity">
    <text evidence="6">Belongs to the fasciclin-like AGP family.</text>
</comment>
<organism>
    <name type="scientific">Arabidopsis thaliana</name>
    <name type="common">Mouse-ear cress</name>
    <dbReference type="NCBI Taxonomy" id="3702"/>
    <lineage>
        <taxon>Eukaryota</taxon>
        <taxon>Viridiplantae</taxon>
        <taxon>Streptophyta</taxon>
        <taxon>Embryophyta</taxon>
        <taxon>Tracheophyta</taxon>
        <taxon>Spermatophyta</taxon>
        <taxon>Magnoliopsida</taxon>
        <taxon>eudicotyledons</taxon>
        <taxon>Gunneridae</taxon>
        <taxon>Pentapetalae</taxon>
        <taxon>rosids</taxon>
        <taxon>malvids</taxon>
        <taxon>Brassicales</taxon>
        <taxon>Brassicaceae</taxon>
        <taxon>Camelineae</taxon>
        <taxon>Arabidopsis</taxon>
    </lineage>
</organism>
<proteinExistence type="evidence at protein level"/>
<gene>
    <name type="primary">FLA1</name>
    <name type="ordered locus">At5g55730</name>
    <name type="ORF">MDF20.17</name>
</gene>
<accession>Q9FM65</accession>
<accession>Q8L8T1</accession>
<keyword id="KW-0052">Apoplast</keyword>
<keyword id="KW-1003">Cell membrane</keyword>
<keyword id="KW-0325">Glycoprotein</keyword>
<keyword id="KW-0336">GPI-anchor</keyword>
<keyword id="KW-0449">Lipoprotein</keyword>
<keyword id="KW-0472">Membrane</keyword>
<keyword id="KW-0654">Proteoglycan</keyword>
<keyword id="KW-1185">Reference proteome</keyword>
<keyword id="KW-0677">Repeat</keyword>
<keyword id="KW-0964">Secreted</keyword>
<keyword id="KW-0732">Signal</keyword>